<organism>
    <name type="scientific">Enterobacter sp. (strain 638)</name>
    <dbReference type="NCBI Taxonomy" id="399742"/>
    <lineage>
        <taxon>Bacteria</taxon>
        <taxon>Pseudomonadati</taxon>
        <taxon>Pseudomonadota</taxon>
        <taxon>Gammaproteobacteria</taxon>
        <taxon>Enterobacterales</taxon>
        <taxon>Enterobacteriaceae</taxon>
        <taxon>Enterobacter</taxon>
    </lineage>
</organism>
<evidence type="ECO:0000255" key="1">
    <source>
        <dbReference type="HAMAP-Rule" id="MF_00483"/>
    </source>
</evidence>
<dbReference type="EMBL" id="CP000653">
    <property type="protein sequence ID" value="ABP60512.1"/>
    <property type="molecule type" value="Genomic_DNA"/>
</dbReference>
<dbReference type="RefSeq" id="WP_012017227.1">
    <property type="nucleotide sequence ID" value="NC_009436.1"/>
</dbReference>
<dbReference type="SMR" id="A4W9Y2"/>
<dbReference type="STRING" id="399742.Ent638_1833"/>
<dbReference type="KEGG" id="ent:Ent638_1833"/>
<dbReference type="eggNOG" id="ENOG502Z895">
    <property type="taxonomic scope" value="Bacteria"/>
</dbReference>
<dbReference type="HOGENOM" id="CLU_078181_0_0_6"/>
<dbReference type="OrthoDB" id="6298545at2"/>
<dbReference type="Proteomes" id="UP000000230">
    <property type="component" value="Chromosome"/>
</dbReference>
<dbReference type="GO" id="GO:0005737">
    <property type="term" value="C:cytoplasm"/>
    <property type="evidence" value="ECO:0007669"/>
    <property type="project" value="UniProtKB-SubCell"/>
</dbReference>
<dbReference type="GO" id="GO:0003677">
    <property type="term" value="F:DNA binding"/>
    <property type="evidence" value="ECO:0007669"/>
    <property type="project" value="UniProtKB-UniRule"/>
</dbReference>
<dbReference type="GO" id="GO:0006274">
    <property type="term" value="P:DNA replication termination"/>
    <property type="evidence" value="ECO:0007669"/>
    <property type="project" value="UniProtKB-UniRule"/>
</dbReference>
<dbReference type="Gene3D" id="3.30.54.10">
    <property type="match status" value="1"/>
</dbReference>
<dbReference type="Gene3D" id="3.50.14.10">
    <property type="entry name" value="Replication terminator Tus, domain 1 superfamily/Replication terminator Tus"/>
    <property type="match status" value="1"/>
</dbReference>
<dbReference type="HAMAP" id="MF_00483">
    <property type="entry name" value="Rep_term_Tus"/>
    <property type="match status" value="1"/>
</dbReference>
<dbReference type="InterPro" id="IPR008865">
    <property type="entry name" value="DNA_replication_term_site-bd"/>
</dbReference>
<dbReference type="InterPro" id="IPR036381">
    <property type="entry name" value="Tus_dom1"/>
</dbReference>
<dbReference type="InterPro" id="IPR036384">
    <property type="entry name" value="Tus_sf"/>
</dbReference>
<dbReference type="NCBIfam" id="TIGR02648">
    <property type="entry name" value="rep_term_tus"/>
    <property type="match status" value="1"/>
</dbReference>
<dbReference type="Pfam" id="PF05472">
    <property type="entry name" value="Ter"/>
    <property type="match status" value="1"/>
</dbReference>
<dbReference type="SUPFAM" id="SSF56596">
    <property type="entry name" value="Replication terminator protein (Tus)"/>
    <property type="match status" value="1"/>
</dbReference>
<gene>
    <name evidence="1" type="primary">tus</name>
    <name type="ordered locus">Ent638_1833</name>
</gene>
<feature type="chain" id="PRO_1000060427" description="DNA replication terminus site-binding protein">
    <location>
        <begin position="1"/>
        <end position="309"/>
    </location>
</feature>
<name>TUS_ENT38</name>
<keyword id="KW-0963">Cytoplasm</keyword>
<keyword id="KW-0235">DNA replication</keyword>
<keyword id="KW-0238">DNA-binding</keyword>
<comment type="function">
    <text evidence="1">Trans-acting protein required for termination of DNA replication. Binds to DNA replication terminator sequences (terA to terF) to prevent the passage of replication forks. The termination efficiency will be affected by the affinity of this protein for the terminator sequence.</text>
</comment>
<comment type="subcellular location">
    <subcellularLocation>
        <location evidence="1">Cytoplasm</location>
    </subcellularLocation>
</comment>
<comment type="similarity">
    <text evidence="1">Belongs to the Tus family.</text>
</comment>
<sequence length="309" mass="35464">MATYDLIERLNSTFRQIELELVTLTERLKGCRLLAARVFTLPDVAKGAEHDELNTIEVEQHIGQEAVALTLAHYRHLFIHQQSEKRSSKAAVRLPGVICLQCDGALREEIESQIAHINTLKMAFEKIITEESGLPPAARFEWVHRQLPGLITLNAYRSLTVLRQPATLRFGWANKHIIKNFTRDDVLSLLEKSLKSPRTVTPWSREQWIERLEEEYDNIAALPAETRLKIKRPVKVQPIARVWYAGQQKQVQYACPTPMIALFDAEQGAMVPDIGELLNYDADNIQHRYKPQAQPLRLIIPRLHLYVAE</sequence>
<proteinExistence type="inferred from homology"/>
<protein>
    <recommendedName>
        <fullName evidence="1">DNA replication terminus site-binding protein</fullName>
        <shortName evidence="1">Ter-binding protein</shortName>
    </recommendedName>
</protein>
<reference key="1">
    <citation type="journal article" date="2010" name="PLoS Genet.">
        <title>Genome sequence of the plant growth promoting endophytic bacterium Enterobacter sp. 638.</title>
        <authorList>
            <person name="Taghavi S."/>
            <person name="van der Lelie D."/>
            <person name="Hoffman A."/>
            <person name="Zhang Y.B."/>
            <person name="Walla M.D."/>
            <person name="Vangronsveld J."/>
            <person name="Newman L."/>
            <person name="Monchy S."/>
        </authorList>
    </citation>
    <scope>NUCLEOTIDE SEQUENCE [LARGE SCALE GENOMIC DNA]</scope>
    <source>
        <strain>638</strain>
    </source>
</reference>
<accession>A4W9Y2</accession>